<proteinExistence type="inferred from homology"/>
<accession>B6A7Q3</accession>
<comment type="function">
    <text evidence="1">Serine/threonine-protein kinase involved in the control of the eukaryotic cell cycle, whose activity is controlled by an associated cyclin. Acts as a cell-cycle regulator of Wnt signaling pathway during G2/M phase by mediating the phosphorylation of LRP6 at 'Ser-1490', leading to the activation of the Wnt signaling pathway. Acts as a regulator of cell cycle progression and cell proliferation via its interaction with CCDN3. Phosphorylates RB1 in vitro, however the relevance of such result remains to be confirmed in vivo. May also play a role in meiosis, neuron differentiation and may indirectly act as a negative regulator of insulin-responsive glucose transport (By similarity).</text>
</comment>
<comment type="catalytic activity">
    <reaction>
        <text>L-seryl-[protein] + ATP = O-phospho-L-seryl-[protein] + ADP + H(+)</text>
        <dbReference type="Rhea" id="RHEA:17989"/>
        <dbReference type="Rhea" id="RHEA-COMP:9863"/>
        <dbReference type="Rhea" id="RHEA-COMP:11604"/>
        <dbReference type="ChEBI" id="CHEBI:15378"/>
        <dbReference type="ChEBI" id="CHEBI:29999"/>
        <dbReference type="ChEBI" id="CHEBI:30616"/>
        <dbReference type="ChEBI" id="CHEBI:83421"/>
        <dbReference type="ChEBI" id="CHEBI:456216"/>
        <dbReference type="EC" id="2.7.11.22"/>
    </reaction>
</comment>
<comment type="catalytic activity">
    <reaction>
        <text>L-threonyl-[protein] + ATP = O-phospho-L-threonyl-[protein] + ADP + H(+)</text>
        <dbReference type="Rhea" id="RHEA:46608"/>
        <dbReference type="Rhea" id="RHEA-COMP:11060"/>
        <dbReference type="Rhea" id="RHEA-COMP:11605"/>
        <dbReference type="ChEBI" id="CHEBI:15378"/>
        <dbReference type="ChEBI" id="CHEBI:30013"/>
        <dbReference type="ChEBI" id="CHEBI:30616"/>
        <dbReference type="ChEBI" id="CHEBI:61977"/>
        <dbReference type="ChEBI" id="CHEBI:456216"/>
        <dbReference type="EC" id="2.7.11.22"/>
    </reaction>
</comment>
<comment type="activity regulation">
    <text evidence="1">Serine/threonine-protein kinase activity is promoted by associated cyclins CCDN3 and CCNY and repressed by CDKN1A.</text>
</comment>
<comment type="subunit">
    <text evidence="2">Found in a complex with LRP6, CCNY and CAPRIN2 during G2/M stage; CAPRIN2 functions as a scaffold for the complex by binding to CCNY via its N terminus and to CDK14 via its C terminus. Interacts with CCNY; CCNY mediates its recruitment to the plasma membrane and promotes phosphorylation of LRP6. Interacts with CCDN3 and CDKN1A. Interacts with SEPT8. Interacts with 14-3-3 proteina YWHAB, YWHAE, YWHAH and YWHAQ.</text>
</comment>
<comment type="subcellular location">
    <subcellularLocation>
        <location evidence="1">Cell membrane</location>
        <topology evidence="1">Peripheral membrane protein</topology>
    </subcellularLocation>
    <subcellularLocation>
        <location evidence="1">Cytoplasm</location>
    </subcellularLocation>
    <subcellularLocation>
        <location evidence="1">Nucleus</location>
    </subcellularLocation>
    <text evidence="1">Recruited to the cell membrane by CCNY.</text>
</comment>
<comment type="similarity">
    <text evidence="6">Belongs to the protein kinase superfamily. CMGC Ser/Thr protein kinase family. CDC2/CDKX subfamily.</text>
</comment>
<feature type="chain" id="PRO_0000391901" description="Cyclin-dependent kinase 14">
    <location>
        <begin position="1"/>
        <end position="468"/>
    </location>
</feature>
<feature type="domain" description="Protein kinase" evidence="3">
    <location>
        <begin position="134"/>
        <end position="418"/>
    </location>
</feature>
<feature type="region of interest" description="Disordered" evidence="5">
    <location>
        <begin position="102"/>
        <end position="131"/>
    </location>
</feature>
<feature type="region of interest" description="Disordered" evidence="5">
    <location>
        <begin position="448"/>
        <end position="468"/>
    </location>
</feature>
<feature type="compositionally biased region" description="Polar residues" evidence="5">
    <location>
        <begin position="455"/>
        <end position="468"/>
    </location>
</feature>
<feature type="active site" description="Proton acceptor" evidence="3 4">
    <location>
        <position position="255"/>
    </location>
</feature>
<feature type="binding site" evidence="3">
    <location>
        <begin position="140"/>
        <end position="148"/>
    </location>
    <ligand>
        <name>ATP</name>
        <dbReference type="ChEBI" id="CHEBI:30616"/>
    </ligand>
</feature>
<feature type="binding site" evidence="3">
    <location>
        <position position="163"/>
    </location>
    <ligand>
        <name>ATP</name>
        <dbReference type="ChEBI" id="CHEBI:30616"/>
    </ligand>
</feature>
<feature type="modified residue" description="Phosphoserine" evidence="2">
    <location>
        <position position="24"/>
    </location>
</feature>
<feature type="modified residue" description="Phosphoserine" evidence="2">
    <location>
        <position position="77"/>
    </location>
</feature>
<feature type="modified residue" description="Phosphoserine" evidence="2">
    <location>
        <position position="94"/>
    </location>
</feature>
<feature type="modified residue" description="Phosphoserine" evidence="2">
    <location>
        <position position="133"/>
    </location>
</feature>
<sequence>MCDLIEPQPAEKIGKMKKLRRTLSESFSRIVLNVISFVFQICVTKMSTRNCQGMDSVIKPLDTIPEDKKVRVQRTQSTFDPFEKPTNQVKRVHSENNACINFKSSSAGKESPKVRRHSSPSSPTSPKFGKADSYEKLEKLGEGSYATVYKGKSKVNGKLVALKVIRLQEEEGTPFTAIREASLLKGLKHANIVLLHDIIHTKETLTLVFEYVHTDLCQYMDKHPGGLHPENVKLFLFQLLRGLSYIHQRYILHRDLKPQNLLISDTGELKLADFGLARAKSVPSHTYSNEVVTLWYRPPDVLLGSTEYSTCLDMWGVGCIFVEMIQGVAAFPGMKDIQDQLERIFLVLGTPNEDTWPGVHSLPHFKPERFTLYSSKNLRQAWNKLSYVNHAEDLASKLLQCSPKNRLSAQAALSHEYFSDLPPRLWELTDMSSIFTVPNVRLQPESGESMRAFGKNSSYGKSLSNSKH</sequence>
<evidence type="ECO:0000250" key="1"/>
<evidence type="ECO:0000250" key="2">
    <source>
        <dbReference type="UniProtKB" id="O94921"/>
    </source>
</evidence>
<evidence type="ECO:0000255" key="3">
    <source>
        <dbReference type="PROSITE-ProRule" id="PRU00159"/>
    </source>
</evidence>
<evidence type="ECO:0000255" key="4">
    <source>
        <dbReference type="PROSITE-ProRule" id="PRU10027"/>
    </source>
</evidence>
<evidence type="ECO:0000256" key="5">
    <source>
        <dbReference type="SAM" id="MobiDB-lite"/>
    </source>
</evidence>
<evidence type="ECO:0000305" key="6"/>
<keyword id="KW-0067">ATP-binding</keyword>
<keyword id="KW-0131">Cell cycle</keyword>
<keyword id="KW-0132">Cell division</keyword>
<keyword id="KW-1003">Cell membrane</keyword>
<keyword id="KW-0963">Cytoplasm</keyword>
<keyword id="KW-0418">Kinase</keyword>
<keyword id="KW-0472">Membrane</keyword>
<keyword id="KW-0547">Nucleotide-binding</keyword>
<keyword id="KW-0539">Nucleus</keyword>
<keyword id="KW-0597">Phosphoprotein</keyword>
<keyword id="KW-1185">Reference proteome</keyword>
<keyword id="KW-0723">Serine/threonine-protein kinase</keyword>
<keyword id="KW-0808">Transferase</keyword>
<keyword id="KW-0879">Wnt signaling pathway</keyword>
<protein>
    <recommendedName>
        <fullName>Cyclin-dependent kinase 14</fullName>
        <ecNumber>2.7.11.22</ecNumber>
    </recommendedName>
    <alternativeName>
        <fullName>Cell division protein kinase 14</fullName>
    </alternativeName>
</protein>
<organism>
    <name type="scientific">Oryctolagus cuniculus</name>
    <name type="common">Rabbit</name>
    <dbReference type="NCBI Taxonomy" id="9986"/>
    <lineage>
        <taxon>Eukaryota</taxon>
        <taxon>Metazoa</taxon>
        <taxon>Chordata</taxon>
        <taxon>Craniata</taxon>
        <taxon>Vertebrata</taxon>
        <taxon>Euteleostomi</taxon>
        <taxon>Mammalia</taxon>
        <taxon>Eutheria</taxon>
        <taxon>Euarchontoglires</taxon>
        <taxon>Glires</taxon>
        <taxon>Lagomorpha</taxon>
        <taxon>Leporidae</taxon>
        <taxon>Oryctolagus</taxon>
    </lineage>
</organism>
<name>CDK14_RABIT</name>
<gene>
    <name type="primary">CDK14</name>
    <name type="synonym">PFTK1</name>
</gene>
<reference key="1">
    <citation type="submission" date="2006-09" db="EMBL/GenBank/DDBJ databases">
        <title>NISC comparative sequencing initiative.</title>
        <authorList>
            <person name="Antonellis A."/>
            <person name="Ayele K."/>
            <person name="Benjamin B."/>
            <person name="Blakesley R.W."/>
            <person name="Boakye A."/>
            <person name="Bouffard G.G."/>
            <person name="Brinkley C."/>
            <person name="Brooks S."/>
            <person name="Chu G."/>
            <person name="Coleman H."/>
            <person name="Engle J."/>
            <person name="Gestole M."/>
            <person name="Greene A."/>
            <person name="Guan X."/>
            <person name="Gupta J."/>
            <person name="Haghighi P."/>
            <person name="Han J."/>
            <person name="Hansen N."/>
            <person name="Ho S.-L."/>
            <person name="Hu P."/>
            <person name="Hunter G."/>
            <person name="Hurle B."/>
            <person name="Idol J.R."/>
            <person name="Kwong P."/>
            <person name="Laric P."/>
            <person name="Larson S."/>
            <person name="Lee-Lin S.-Q."/>
            <person name="Legaspi R."/>
            <person name="Madden M."/>
            <person name="Maduro Q.L."/>
            <person name="Maduro V.B."/>
            <person name="Margulies E.H."/>
            <person name="Masiello C."/>
            <person name="Maskeri B."/>
            <person name="McDowell J."/>
            <person name="Mojidi H.A."/>
            <person name="Mullikin J.C."/>
            <person name="Oestreicher J.S."/>
            <person name="Park M."/>
            <person name="Portnoy M.E."/>
            <person name="Prasad A."/>
            <person name="Puri O."/>
            <person name="Reddix-Dugue N."/>
            <person name="Schandler K."/>
            <person name="Schueler M.G."/>
            <person name="Sison C."/>
            <person name="Stantripop S."/>
            <person name="Stephen E."/>
            <person name="Taye A."/>
            <person name="Thomas J.W."/>
            <person name="Thomas P.J."/>
            <person name="Tsipouri V."/>
            <person name="Ung L."/>
            <person name="Vogt J.L."/>
            <person name="Wetherby K.D."/>
            <person name="Young A."/>
            <person name="Green E.D."/>
        </authorList>
    </citation>
    <scope>NUCLEOTIDE SEQUENCE [LARGE SCALE GENOMIC DNA]</scope>
</reference>
<dbReference type="EC" id="2.7.11.22"/>
<dbReference type="EMBL" id="DP000945">
    <property type="protein sequence ID" value="ACI62516.1"/>
    <property type="molecule type" value="Genomic_DNA"/>
</dbReference>
<dbReference type="RefSeq" id="NP_001164748.1">
    <property type="nucleotide sequence ID" value="NM_001171277.1"/>
</dbReference>
<dbReference type="SMR" id="B6A7Q3"/>
<dbReference type="STRING" id="9986.ENSOCUP00000007965"/>
<dbReference type="PaxDb" id="9986-ENSOCUP00000007965"/>
<dbReference type="GeneID" id="100328634"/>
<dbReference type="KEGG" id="ocu:100328634"/>
<dbReference type="CTD" id="5218"/>
<dbReference type="eggNOG" id="KOG0594">
    <property type="taxonomic scope" value="Eukaryota"/>
</dbReference>
<dbReference type="InParanoid" id="B6A7Q3"/>
<dbReference type="OrthoDB" id="1732493at2759"/>
<dbReference type="Proteomes" id="UP000001811">
    <property type="component" value="Unplaced"/>
</dbReference>
<dbReference type="GO" id="GO:0000308">
    <property type="term" value="C:cytoplasmic cyclin-dependent protein kinase holoenzyme complex"/>
    <property type="evidence" value="ECO:0000250"/>
    <property type="project" value="UniProtKB"/>
</dbReference>
<dbReference type="GO" id="GO:0005829">
    <property type="term" value="C:cytosol"/>
    <property type="evidence" value="ECO:0007669"/>
    <property type="project" value="TreeGrafter"/>
</dbReference>
<dbReference type="GO" id="GO:0005634">
    <property type="term" value="C:nucleus"/>
    <property type="evidence" value="ECO:0007669"/>
    <property type="project" value="UniProtKB-SubCell"/>
</dbReference>
<dbReference type="GO" id="GO:0005886">
    <property type="term" value="C:plasma membrane"/>
    <property type="evidence" value="ECO:0000250"/>
    <property type="project" value="UniProtKB"/>
</dbReference>
<dbReference type="GO" id="GO:0005524">
    <property type="term" value="F:ATP binding"/>
    <property type="evidence" value="ECO:0007669"/>
    <property type="project" value="UniProtKB-KW"/>
</dbReference>
<dbReference type="GO" id="GO:0030332">
    <property type="term" value="F:cyclin binding"/>
    <property type="evidence" value="ECO:0007669"/>
    <property type="project" value="TreeGrafter"/>
</dbReference>
<dbReference type="GO" id="GO:0004693">
    <property type="term" value="F:cyclin-dependent protein serine/threonine kinase activity"/>
    <property type="evidence" value="ECO:0000250"/>
    <property type="project" value="UniProtKB"/>
</dbReference>
<dbReference type="GO" id="GO:0106310">
    <property type="term" value="F:protein serine kinase activity"/>
    <property type="evidence" value="ECO:0007669"/>
    <property type="project" value="RHEA"/>
</dbReference>
<dbReference type="GO" id="GO:0051301">
    <property type="term" value="P:cell division"/>
    <property type="evidence" value="ECO:0007669"/>
    <property type="project" value="UniProtKB-KW"/>
</dbReference>
<dbReference type="GO" id="GO:0000086">
    <property type="term" value="P:G2/M transition of mitotic cell cycle"/>
    <property type="evidence" value="ECO:0000250"/>
    <property type="project" value="UniProtKB"/>
</dbReference>
<dbReference type="GO" id="GO:0060828">
    <property type="term" value="P:regulation of canonical Wnt signaling pathway"/>
    <property type="evidence" value="ECO:0000250"/>
    <property type="project" value="UniProtKB"/>
</dbReference>
<dbReference type="GO" id="GO:0016055">
    <property type="term" value="P:Wnt signaling pathway"/>
    <property type="evidence" value="ECO:0007669"/>
    <property type="project" value="UniProtKB-KW"/>
</dbReference>
<dbReference type="CDD" id="cd07869">
    <property type="entry name" value="STKc_PFTAIRE1"/>
    <property type="match status" value="1"/>
</dbReference>
<dbReference type="FunFam" id="1.10.510.10:FF:000131">
    <property type="entry name" value="cyclin-dependent kinase 14 isoform X1"/>
    <property type="match status" value="1"/>
</dbReference>
<dbReference type="FunFam" id="3.30.200.20:FF:000007">
    <property type="entry name" value="Cyclin-dependent kinase 14, putative"/>
    <property type="match status" value="1"/>
</dbReference>
<dbReference type="Gene3D" id="3.30.200.20">
    <property type="entry name" value="Phosphorylase Kinase, domain 1"/>
    <property type="match status" value="1"/>
</dbReference>
<dbReference type="Gene3D" id="1.10.510.10">
    <property type="entry name" value="Transferase(Phosphotransferase) domain 1"/>
    <property type="match status" value="1"/>
</dbReference>
<dbReference type="InterPro" id="IPR050108">
    <property type="entry name" value="CDK"/>
</dbReference>
<dbReference type="InterPro" id="IPR011009">
    <property type="entry name" value="Kinase-like_dom_sf"/>
</dbReference>
<dbReference type="InterPro" id="IPR000719">
    <property type="entry name" value="Prot_kinase_dom"/>
</dbReference>
<dbReference type="InterPro" id="IPR017441">
    <property type="entry name" value="Protein_kinase_ATP_BS"/>
</dbReference>
<dbReference type="InterPro" id="IPR008271">
    <property type="entry name" value="Ser/Thr_kinase_AS"/>
</dbReference>
<dbReference type="PANTHER" id="PTHR24056">
    <property type="entry name" value="CELL DIVISION PROTEIN KINASE"/>
    <property type="match status" value="1"/>
</dbReference>
<dbReference type="PANTHER" id="PTHR24056:SF154">
    <property type="entry name" value="CYCLIN-DEPENDENT KINASE 14"/>
    <property type="match status" value="1"/>
</dbReference>
<dbReference type="Pfam" id="PF00069">
    <property type="entry name" value="Pkinase"/>
    <property type="match status" value="1"/>
</dbReference>
<dbReference type="SMART" id="SM00220">
    <property type="entry name" value="S_TKc"/>
    <property type="match status" value="1"/>
</dbReference>
<dbReference type="SUPFAM" id="SSF56112">
    <property type="entry name" value="Protein kinase-like (PK-like)"/>
    <property type="match status" value="1"/>
</dbReference>
<dbReference type="PROSITE" id="PS00107">
    <property type="entry name" value="PROTEIN_KINASE_ATP"/>
    <property type="match status" value="1"/>
</dbReference>
<dbReference type="PROSITE" id="PS50011">
    <property type="entry name" value="PROTEIN_KINASE_DOM"/>
    <property type="match status" value="1"/>
</dbReference>
<dbReference type="PROSITE" id="PS00108">
    <property type="entry name" value="PROTEIN_KINASE_ST"/>
    <property type="match status" value="1"/>
</dbReference>